<dbReference type="EC" id="3.1.1.29" evidence="1"/>
<dbReference type="EMBL" id="CP000699">
    <property type="protein sequence ID" value="ABQ67742.1"/>
    <property type="molecule type" value="Genomic_DNA"/>
</dbReference>
<dbReference type="SMR" id="A5V626"/>
<dbReference type="STRING" id="392499.Swit_1378"/>
<dbReference type="PaxDb" id="392499-Swit_1378"/>
<dbReference type="KEGG" id="swi:Swit_1378"/>
<dbReference type="eggNOG" id="COG0193">
    <property type="taxonomic scope" value="Bacteria"/>
</dbReference>
<dbReference type="HOGENOM" id="CLU_062456_1_0_5"/>
<dbReference type="OrthoDB" id="9800507at2"/>
<dbReference type="Proteomes" id="UP000001989">
    <property type="component" value="Chromosome"/>
</dbReference>
<dbReference type="GO" id="GO:0005737">
    <property type="term" value="C:cytoplasm"/>
    <property type="evidence" value="ECO:0007669"/>
    <property type="project" value="UniProtKB-SubCell"/>
</dbReference>
<dbReference type="GO" id="GO:0004045">
    <property type="term" value="F:peptidyl-tRNA hydrolase activity"/>
    <property type="evidence" value="ECO:0007669"/>
    <property type="project" value="UniProtKB-UniRule"/>
</dbReference>
<dbReference type="GO" id="GO:0000049">
    <property type="term" value="F:tRNA binding"/>
    <property type="evidence" value="ECO:0007669"/>
    <property type="project" value="UniProtKB-UniRule"/>
</dbReference>
<dbReference type="GO" id="GO:0006515">
    <property type="term" value="P:protein quality control for misfolded or incompletely synthesized proteins"/>
    <property type="evidence" value="ECO:0007669"/>
    <property type="project" value="UniProtKB-UniRule"/>
</dbReference>
<dbReference type="GO" id="GO:0072344">
    <property type="term" value="P:rescue of stalled ribosome"/>
    <property type="evidence" value="ECO:0007669"/>
    <property type="project" value="UniProtKB-UniRule"/>
</dbReference>
<dbReference type="CDD" id="cd00462">
    <property type="entry name" value="PTH"/>
    <property type="match status" value="1"/>
</dbReference>
<dbReference type="FunFam" id="3.40.50.1470:FF:000001">
    <property type="entry name" value="Peptidyl-tRNA hydrolase"/>
    <property type="match status" value="1"/>
</dbReference>
<dbReference type="Gene3D" id="3.40.50.1470">
    <property type="entry name" value="Peptidyl-tRNA hydrolase"/>
    <property type="match status" value="1"/>
</dbReference>
<dbReference type="HAMAP" id="MF_00083">
    <property type="entry name" value="Pept_tRNA_hydro_bact"/>
    <property type="match status" value="1"/>
</dbReference>
<dbReference type="InterPro" id="IPR001328">
    <property type="entry name" value="Pept_tRNA_hydro"/>
</dbReference>
<dbReference type="InterPro" id="IPR018171">
    <property type="entry name" value="Pept_tRNA_hydro_CS"/>
</dbReference>
<dbReference type="InterPro" id="IPR036416">
    <property type="entry name" value="Pept_tRNA_hydro_sf"/>
</dbReference>
<dbReference type="NCBIfam" id="TIGR00447">
    <property type="entry name" value="pth"/>
    <property type="match status" value="1"/>
</dbReference>
<dbReference type="PANTHER" id="PTHR17224">
    <property type="entry name" value="PEPTIDYL-TRNA HYDROLASE"/>
    <property type="match status" value="1"/>
</dbReference>
<dbReference type="PANTHER" id="PTHR17224:SF1">
    <property type="entry name" value="PEPTIDYL-TRNA HYDROLASE"/>
    <property type="match status" value="1"/>
</dbReference>
<dbReference type="Pfam" id="PF01195">
    <property type="entry name" value="Pept_tRNA_hydro"/>
    <property type="match status" value="1"/>
</dbReference>
<dbReference type="SUPFAM" id="SSF53178">
    <property type="entry name" value="Peptidyl-tRNA hydrolase-like"/>
    <property type="match status" value="1"/>
</dbReference>
<dbReference type="PROSITE" id="PS01196">
    <property type="entry name" value="PEPT_TRNA_HYDROL_2"/>
    <property type="match status" value="1"/>
</dbReference>
<gene>
    <name evidence="1" type="primary">pth</name>
    <name type="ordered locus">Swit_1378</name>
</gene>
<name>PTH_RHIWR</name>
<feature type="chain" id="PRO_1000010653" description="Peptidyl-tRNA hydrolase">
    <location>
        <begin position="1"/>
        <end position="189"/>
    </location>
</feature>
<feature type="active site" description="Proton acceptor" evidence="1">
    <location>
        <position position="19"/>
    </location>
</feature>
<feature type="binding site" evidence="1">
    <location>
        <position position="14"/>
    </location>
    <ligand>
        <name>tRNA</name>
        <dbReference type="ChEBI" id="CHEBI:17843"/>
    </ligand>
</feature>
<feature type="binding site" evidence="1">
    <location>
        <position position="64"/>
    </location>
    <ligand>
        <name>tRNA</name>
        <dbReference type="ChEBI" id="CHEBI:17843"/>
    </ligand>
</feature>
<feature type="binding site" evidence="1">
    <location>
        <position position="66"/>
    </location>
    <ligand>
        <name>tRNA</name>
        <dbReference type="ChEBI" id="CHEBI:17843"/>
    </ligand>
</feature>
<feature type="binding site" evidence="1">
    <location>
        <position position="112"/>
    </location>
    <ligand>
        <name>tRNA</name>
        <dbReference type="ChEBI" id="CHEBI:17843"/>
    </ligand>
</feature>
<feature type="site" description="Discriminates between blocked and unblocked aminoacyl-tRNA" evidence="1">
    <location>
        <position position="9"/>
    </location>
</feature>
<feature type="site" description="Stabilizes the basic form of H active site to accept a proton" evidence="1">
    <location>
        <position position="91"/>
    </location>
</feature>
<comment type="function">
    <text evidence="1">Hydrolyzes ribosome-free peptidyl-tRNAs (with 1 or more amino acids incorporated), which drop off the ribosome during protein synthesis, or as a result of ribosome stalling.</text>
</comment>
<comment type="function">
    <text evidence="1">Catalyzes the release of premature peptidyl moieties from peptidyl-tRNA molecules trapped in stalled 50S ribosomal subunits, and thus maintains levels of free tRNAs and 50S ribosomes.</text>
</comment>
<comment type="catalytic activity">
    <reaction evidence="1">
        <text>an N-acyl-L-alpha-aminoacyl-tRNA + H2O = an N-acyl-L-amino acid + a tRNA + H(+)</text>
        <dbReference type="Rhea" id="RHEA:54448"/>
        <dbReference type="Rhea" id="RHEA-COMP:10123"/>
        <dbReference type="Rhea" id="RHEA-COMP:13883"/>
        <dbReference type="ChEBI" id="CHEBI:15377"/>
        <dbReference type="ChEBI" id="CHEBI:15378"/>
        <dbReference type="ChEBI" id="CHEBI:59874"/>
        <dbReference type="ChEBI" id="CHEBI:78442"/>
        <dbReference type="ChEBI" id="CHEBI:138191"/>
        <dbReference type="EC" id="3.1.1.29"/>
    </reaction>
</comment>
<comment type="subunit">
    <text evidence="1">Monomer.</text>
</comment>
<comment type="subcellular location">
    <subcellularLocation>
        <location evidence="1">Cytoplasm</location>
    </subcellularLocation>
</comment>
<comment type="similarity">
    <text evidence="1">Belongs to the PTH family.</text>
</comment>
<evidence type="ECO:0000255" key="1">
    <source>
        <dbReference type="HAMAP-Rule" id="MF_00083"/>
    </source>
</evidence>
<reference key="1">
    <citation type="journal article" date="2010" name="J. Bacteriol.">
        <title>Genome sequence of the dioxin-mineralizing bacterium Sphingomonas wittichii RW1.</title>
        <authorList>
            <person name="Miller T.R."/>
            <person name="Delcher A.L."/>
            <person name="Salzberg S.L."/>
            <person name="Saunders E."/>
            <person name="Detter J.C."/>
            <person name="Halden R.U."/>
        </authorList>
    </citation>
    <scope>NUCLEOTIDE SEQUENCE [LARGE SCALE GENOMIC DNA]</scope>
    <source>
        <strain>DSM 6014 / CCUG 31198 / JCM 15750 / NBRC 105917 / EY 4224 / RW1</strain>
    </source>
</reference>
<proteinExistence type="inferred from homology"/>
<protein>
    <recommendedName>
        <fullName evidence="1">Peptidyl-tRNA hydrolase</fullName>
        <shortName evidence="1">Pth</shortName>
        <ecNumber evidence="1">3.1.1.29</ecNumber>
    </recommendedName>
</protein>
<organism>
    <name type="scientific">Rhizorhabdus wittichii (strain DSM 6014 / CCUG 31198 / JCM 15750 / NBRC 105917 / EY 4224 / RW1)</name>
    <name type="common">Sphingomonas wittichii</name>
    <dbReference type="NCBI Taxonomy" id="392499"/>
    <lineage>
        <taxon>Bacteria</taxon>
        <taxon>Pseudomonadati</taxon>
        <taxon>Pseudomonadota</taxon>
        <taxon>Alphaproteobacteria</taxon>
        <taxon>Sphingomonadales</taxon>
        <taxon>Sphingomonadaceae</taxon>
        <taxon>Rhizorhabdus</taxon>
    </lineage>
</organism>
<keyword id="KW-0963">Cytoplasm</keyword>
<keyword id="KW-0378">Hydrolase</keyword>
<keyword id="KW-1185">Reference proteome</keyword>
<keyword id="KW-0694">RNA-binding</keyword>
<keyword id="KW-0820">tRNA-binding</keyword>
<sequence>MQIWVGLGNPGAQYAMHRHNVGFMAVDTIAEVHRFDPWKKQFQGWSATGRIGNVKVLLLKPATFMNESGRSVGEAMRFFKRETGDVTVFHDELDLAPFKVKVKTGGGTAGHNGLRSTEAHIGNAFRRVRIGIGHPGHKDRVTGYVLGNYVKAELDPLAGMLGAIASEADWLASGDDARFMSEIALRLAD</sequence>
<accession>A5V626</accession>